<accession>Q8QG61</accession>
<keyword id="KW-0090">Biological rhythms</keyword>
<keyword id="KW-0157">Chromophore</keyword>
<keyword id="KW-0963">Cytoplasm</keyword>
<keyword id="KW-0274">FAD</keyword>
<keyword id="KW-0285">Flavoprotein</keyword>
<keyword id="KW-0547">Nucleotide-binding</keyword>
<keyword id="KW-0539">Nucleus</keyword>
<keyword id="KW-0600">Photoreceptor protein</keyword>
<keyword id="KW-0675">Receptor</keyword>
<keyword id="KW-1185">Reference proteome</keyword>
<keyword id="KW-0678">Repressor</keyword>
<keyword id="KW-0716">Sensory transduction</keyword>
<keyword id="KW-0804">Transcription</keyword>
<keyword id="KW-0805">Transcription regulation</keyword>
<proteinExistence type="evidence at transcript level"/>
<evidence type="ECO:0000250" key="1"/>
<evidence type="ECO:0000250" key="2">
    <source>
        <dbReference type="UniProtKB" id="P97784"/>
    </source>
</evidence>
<evidence type="ECO:0000250" key="3">
    <source>
        <dbReference type="UniProtKB" id="Q16526"/>
    </source>
</evidence>
<evidence type="ECO:0000256" key="4">
    <source>
        <dbReference type="SAM" id="MobiDB-lite"/>
    </source>
</evidence>
<evidence type="ECO:0000269" key="5">
    <source>
    </source>
</evidence>
<evidence type="ECO:0000305" key="6"/>
<name>CRY1_CHICK</name>
<sequence>MGVNAVHWFRKGLRLHDNPALRECIRGADTVRCVYILDPWFAGSSNVGINRWRFLLQCLEDLDANLRKLNSRLFVIRGQPADVFPRLFKEWSIAKLSIEYDSEPFGKERDAAIKKLASEAGVEVIVRISHTLYDLDKIIELNGGQPPLTYKRFQTLISRMEPLEMPVETITPEVMQKCTTPVSDDHDEKYGVPSLEELGFDTDGLPSAVWPGGETEALTRLERHLERKAWVANFERPRMNANSLLASPTGLSPYLRFGCLSCRLFYFKLTDLYKKVKKNSSPPLSLYGQLLWREFFYTAATNNPRFDKMEGNPICVQIPWDKNPEALAKWAEGRTGFPWIDAIMTQLRQEGWIHHLARHAVACFLTRGDLWISWEEGMKVFEELLLDADWSVNAGSWMWLSCSSFFQQFFHCYCPVGFGRRTDPNGDYIRRYLPVLRGFPAKYIYDPWNAPESVQKAAKCVIGVNYPKPMVNHAEASRLNIERMKQIYQQLSRYRGLGLLATVPSNPNGNGNGGLMSFSPGESISGCSSAGGAQLGTGDGQTVGVQTCALGDSHTGGSGVQQQGYCQASSILRYAHGDNQQSHLMQPGRASLGTGISAGKRPNPEEETQSVGPKVQRQSTN</sequence>
<feature type="chain" id="PRO_0000261145" description="Cryptochrome-1">
    <location>
        <begin position="1"/>
        <end position="621"/>
    </location>
</feature>
<feature type="domain" description="Photolyase/cryptochrome alpha/beta">
    <location>
        <begin position="3"/>
        <end position="132"/>
    </location>
</feature>
<feature type="region of interest" description="Disordered" evidence="4">
    <location>
        <begin position="581"/>
        <end position="621"/>
    </location>
</feature>
<feature type="short sequence motif" description="LIR 1" evidence="2">
    <location>
        <begin position="50"/>
        <end position="54"/>
    </location>
</feature>
<feature type="short sequence motif" description="LIR 2" evidence="2">
    <location>
        <begin position="82"/>
        <end position="87"/>
    </location>
</feature>
<feature type="short sequence motif" description="LIR 3" evidence="2">
    <location>
        <begin position="151"/>
        <end position="156"/>
    </location>
</feature>
<feature type="short sequence motif" description="LIR 4" evidence="2">
    <location>
        <begin position="255"/>
        <end position="260"/>
    </location>
</feature>
<feature type="short sequence motif" description="LIR 5" evidence="2">
    <location>
        <begin position="271"/>
        <end position="276"/>
    </location>
</feature>
<feature type="short sequence motif" description="LIR 6" evidence="2">
    <location>
        <begin position="285"/>
        <end position="290"/>
    </location>
</feature>
<feature type="short sequence motif" description="LIR 7" evidence="2">
    <location>
        <begin position="335"/>
        <end position="339"/>
    </location>
</feature>
<feature type="short sequence motif" description="LIR 8" evidence="2">
    <location>
        <begin position="379"/>
        <end position="384"/>
    </location>
</feature>
<feature type="short sequence motif" description="LIR 9" evidence="2">
    <location>
        <begin position="395"/>
        <end position="400"/>
    </location>
</feature>
<feature type="short sequence motif" description="LIR 10" evidence="2">
    <location>
        <begin position="411"/>
        <end position="416"/>
    </location>
</feature>
<feature type="short sequence motif" description="LIR 11" evidence="2">
    <location>
        <begin position="430"/>
        <end position="435"/>
    </location>
</feature>
<feature type="short sequence motif" description="LIR 12" evidence="2">
    <location>
        <begin position="486"/>
        <end position="491"/>
    </location>
</feature>
<feature type="short sequence motif" description="LIR 13" evidence="2">
    <location>
        <begin position="492"/>
        <end position="497"/>
    </location>
</feature>
<feature type="binding site" evidence="2">
    <location>
        <position position="252"/>
    </location>
    <ligand>
        <name>FAD</name>
        <dbReference type="ChEBI" id="CHEBI:57692"/>
    </ligand>
</feature>
<feature type="binding site" evidence="2">
    <location>
        <position position="289"/>
    </location>
    <ligand>
        <name>FAD</name>
        <dbReference type="ChEBI" id="CHEBI:57692"/>
    </ligand>
</feature>
<feature type="binding site" evidence="2">
    <location>
        <position position="355"/>
    </location>
    <ligand>
        <name>FAD</name>
        <dbReference type="ChEBI" id="CHEBI:57692"/>
    </ligand>
</feature>
<feature type="binding site" evidence="2">
    <location>
        <begin position="387"/>
        <end position="389"/>
    </location>
    <ligand>
        <name>FAD</name>
        <dbReference type="ChEBI" id="CHEBI:57692"/>
    </ligand>
</feature>
<organism>
    <name type="scientific">Gallus gallus</name>
    <name type="common">Chicken</name>
    <dbReference type="NCBI Taxonomy" id="9031"/>
    <lineage>
        <taxon>Eukaryota</taxon>
        <taxon>Metazoa</taxon>
        <taxon>Chordata</taxon>
        <taxon>Craniata</taxon>
        <taxon>Vertebrata</taxon>
        <taxon>Euteleostomi</taxon>
        <taxon>Archelosauria</taxon>
        <taxon>Archosauria</taxon>
        <taxon>Dinosauria</taxon>
        <taxon>Saurischia</taxon>
        <taxon>Theropoda</taxon>
        <taxon>Coelurosauria</taxon>
        <taxon>Aves</taxon>
        <taxon>Neognathae</taxon>
        <taxon>Galloanserae</taxon>
        <taxon>Galliformes</taxon>
        <taxon>Phasianidae</taxon>
        <taxon>Phasianinae</taxon>
        <taxon>Gallus</taxon>
    </lineage>
</organism>
<protein>
    <recommendedName>
        <fullName>Cryptochrome-1</fullName>
    </recommendedName>
</protein>
<dbReference type="EMBL" id="AY034432">
    <property type="protein sequence ID" value="AAK61385.1"/>
    <property type="molecule type" value="mRNA"/>
</dbReference>
<dbReference type="RefSeq" id="NP_989576.1">
    <property type="nucleotide sequence ID" value="NM_204245.2"/>
</dbReference>
<dbReference type="SMR" id="Q8QG61"/>
<dbReference type="FunCoup" id="Q8QG61">
    <property type="interactions" value="927"/>
</dbReference>
<dbReference type="STRING" id="9031.ENSGALP00000020598"/>
<dbReference type="PaxDb" id="9031-ENSGALP00000020598"/>
<dbReference type="GeneID" id="374093"/>
<dbReference type="KEGG" id="gga:374093"/>
<dbReference type="CTD" id="1407"/>
<dbReference type="VEuPathDB" id="HostDB:geneid_374093"/>
<dbReference type="eggNOG" id="KOG0133">
    <property type="taxonomic scope" value="Eukaryota"/>
</dbReference>
<dbReference type="InParanoid" id="Q8QG61"/>
<dbReference type="OMA" id="YTVFTPY"/>
<dbReference type="OrthoDB" id="435881at2759"/>
<dbReference type="PhylomeDB" id="Q8QG61"/>
<dbReference type="PRO" id="PR:Q8QG61"/>
<dbReference type="Proteomes" id="UP000000539">
    <property type="component" value="Unassembled WGS sequence"/>
</dbReference>
<dbReference type="GO" id="GO:0005737">
    <property type="term" value="C:cytoplasm"/>
    <property type="evidence" value="ECO:0000318"/>
    <property type="project" value="GO_Central"/>
</dbReference>
<dbReference type="GO" id="GO:0005829">
    <property type="term" value="C:cytosol"/>
    <property type="evidence" value="ECO:0000314"/>
    <property type="project" value="AgBase"/>
</dbReference>
<dbReference type="GO" id="GO:0005634">
    <property type="term" value="C:nucleus"/>
    <property type="evidence" value="ECO:0000250"/>
    <property type="project" value="UniProtKB"/>
</dbReference>
<dbReference type="GO" id="GO:0097381">
    <property type="term" value="C:photoreceptor disc membrane"/>
    <property type="evidence" value="ECO:0000314"/>
    <property type="project" value="AgBase"/>
</dbReference>
<dbReference type="GO" id="GO:0042622">
    <property type="term" value="C:photoreceptor outer segment membrane"/>
    <property type="evidence" value="ECO:0000314"/>
    <property type="project" value="AgBase"/>
</dbReference>
<dbReference type="GO" id="GO:0003677">
    <property type="term" value="F:DNA binding"/>
    <property type="evidence" value="ECO:0000318"/>
    <property type="project" value="GO_Central"/>
</dbReference>
<dbReference type="GO" id="GO:0071949">
    <property type="term" value="F:FAD binding"/>
    <property type="evidence" value="ECO:0000318"/>
    <property type="project" value="GO_Central"/>
</dbReference>
<dbReference type="GO" id="GO:0009881">
    <property type="term" value="F:photoreceptor activity"/>
    <property type="evidence" value="ECO:0007669"/>
    <property type="project" value="UniProtKB-KW"/>
</dbReference>
<dbReference type="GO" id="GO:0032922">
    <property type="term" value="P:circadian regulation of gene expression"/>
    <property type="evidence" value="ECO:0000318"/>
    <property type="project" value="GO_Central"/>
</dbReference>
<dbReference type="GO" id="GO:0007623">
    <property type="term" value="P:circadian rhythm"/>
    <property type="evidence" value="ECO:0000250"/>
    <property type="project" value="UniProtKB"/>
</dbReference>
<dbReference type="GO" id="GO:0043153">
    <property type="term" value="P:entrainment of circadian clock by photoperiod"/>
    <property type="evidence" value="ECO:0000318"/>
    <property type="project" value="GO_Central"/>
</dbReference>
<dbReference type="GO" id="GO:0045892">
    <property type="term" value="P:negative regulation of DNA-templated transcription"/>
    <property type="evidence" value="ECO:0000318"/>
    <property type="project" value="GO_Central"/>
</dbReference>
<dbReference type="GO" id="GO:0045721">
    <property type="term" value="P:negative regulation of gluconeogenesis"/>
    <property type="evidence" value="ECO:0000250"/>
    <property type="project" value="UniProtKB"/>
</dbReference>
<dbReference type="GO" id="GO:0031398">
    <property type="term" value="P:positive regulation of protein ubiquitination"/>
    <property type="evidence" value="ECO:0000250"/>
    <property type="project" value="UniProtKB"/>
</dbReference>
<dbReference type="GO" id="GO:0009416">
    <property type="term" value="P:response to light stimulus"/>
    <property type="evidence" value="ECO:0000250"/>
    <property type="project" value="UniProtKB"/>
</dbReference>
<dbReference type="FunFam" id="1.10.579.10:FF:000001">
    <property type="entry name" value="Cryptochrome 1"/>
    <property type="match status" value="1"/>
</dbReference>
<dbReference type="FunFam" id="1.25.40.80:FF:000002">
    <property type="entry name" value="cryptochrome-1 isoform X1"/>
    <property type="match status" value="1"/>
</dbReference>
<dbReference type="FunFam" id="1.25.40.80:FF:000003">
    <property type="entry name" value="cryptochrome-1 isoform X1"/>
    <property type="match status" value="1"/>
</dbReference>
<dbReference type="FunFam" id="3.40.50.620:FF:000099">
    <property type="entry name" value="cryptochrome-1 isoform X1"/>
    <property type="match status" value="1"/>
</dbReference>
<dbReference type="Gene3D" id="1.25.40.80">
    <property type="match status" value="2"/>
</dbReference>
<dbReference type="Gene3D" id="1.10.579.10">
    <property type="entry name" value="DNA Cyclobutane Dipyrimidine Photolyase, subunit A, domain 3"/>
    <property type="match status" value="1"/>
</dbReference>
<dbReference type="Gene3D" id="3.40.50.620">
    <property type="entry name" value="HUPs"/>
    <property type="match status" value="1"/>
</dbReference>
<dbReference type="InterPro" id="IPR036134">
    <property type="entry name" value="Crypto/Photolyase_FAD-like_sf"/>
</dbReference>
<dbReference type="InterPro" id="IPR036155">
    <property type="entry name" value="Crypto/Photolyase_N_sf"/>
</dbReference>
<dbReference type="InterPro" id="IPR005101">
    <property type="entry name" value="Cryptochr/Photolyase_FAD-bd"/>
</dbReference>
<dbReference type="InterPro" id="IPR002081">
    <property type="entry name" value="Cryptochrome/DNA_photolyase_1"/>
</dbReference>
<dbReference type="InterPro" id="IPR006050">
    <property type="entry name" value="DNA_photolyase_N"/>
</dbReference>
<dbReference type="InterPro" id="IPR014729">
    <property type="entry name" value="Rossmann-like_a/b/a_fold"/>
</dbReference>
<dbReference type="PANTHER" id="PTHR11455">
    <property type="entry name" value="CRYPTOCHROME"/>
    <property type="match status" value="1"/>
</dbReference>
<dbReference type="PANTHER" id="PTHR11455:SF16">
    <property type="entry name" value="CRYPTOCHROME-1"/>
    <property type="match status" value="1"/>
</dbReference>
<dbReference type="Pfam" id="PF00875">
    <property type="entry name" value="DNA_photolyase"/>
    <property type="match status" value="1"/>
</dbReference>
<dbReference type="Pfam" id="PF03441">
    <property type="entry name" value="FAD_binding_7"/>
    <property type="match status" value="1"/>
</dbReference>
<dbReference type="SUPFAM" id="SSF48173">
    <property type="entry name" value="Cryptochrome/photolyase FAD-binding domain"/>
    <property type="match status" value="1"/>
</dbReference>
<dbReference type="SUPFAM" id="SSF52425">
    <property type="entry name" value="Cryptochrome/photolyase, N-terminal domain"/>
    <property type="match status" value="1"/>
</dbReference>
<dbReference type="PROSITE" id="PS51645">
    <property type="entry name" value="PHR_CRY_ALPHA_BETA"/>
    <property type="match status" value="1"/>
</dbReference>
<gene>
    <name type="primary">CRY1</name>
</gene>
<comment type="function">
    <text evidence="2 3 5">Transcriptional repressor which forms a core component of the circadian clock. The circadian clock, an internal time-keeping system, regulates various physiological processes through the generation of approximately 24 hour circadian rhythms in gene expression, which are translated into rhythms in metabolism and behavior. It is derived from the Latin roots 'circa' (about) and 'diem' (day) and acts as an important regulator of a wide array of physiological functions including metabolism, sleep, body temperature, blood pressure, endocrine, immune, cardiovascular, and renal function. Consists of two major components: the central clock, residing in the suprachiasmatic nucleus (SCN) of the brain, and the peripheral clocks that are present in nearly every tissue and organ system. Both the central and peripheral clocks can be reset by environmental cues, also known as Zeitgebers (German for 'timegivers'). The predominant Zeitgeber for the central clock is light, which is sensed by retina and signals directly to the SCN. The central clock entrains the peripheral clocks through neuronal and hormonal signals, body temperature and feeding-related cues, aligning all clocks with the external light/dark cycle. Circadian rhythms allow an organism to achieve temporal homeostasis with its environment at the molecular level by regulating gene expression to create a peak of protein expression once every 24 hours to control when a particular physiological process is most active with respect to the solar day. Transcription and translation of core clock components (CLOCK, NPAS2, BMAL1, BMAL2, PER1, PER2, PER3, CRY1 and CRY2) plays a critical role in rhythm generation, whereas delays imposed by post-translational modifications (PTMs) are important for determining the period (tau) of the rhythms (tau refers to the period of a rhythm and is the length, in time, of one complete cycle). A diurnal rhythm is synchronized with the day/night cycle, while the ultradian and infradian rhythms have a period shorter and longer than 24 hours, respectively. Disruptions in the circadian rhythms contribute to the pathology of cardiovascular diseases, cancer, metabolic syndromes and aging. A transcription/translation feedback loop (TTFL) forms the core of the molecular circadian clock mechanism. Transcription factors, CLOCK or NPAS2 and BMAL1 or BMAL2, form the positive limb of the feedback loop, act in the form of a heterodimer and activate the transcription of core clock genes and clock-controlled genes (involved in key metabolic processes), harboring E-box elements (5'-CACGTG-3') within their promoters. The core clock genes: PER1/2/3 and CRY1/2 which are transcriptional repressors form the negative limb of the feedback loop and interact with the CLOCK|NPAS2-BMAL1|BMAL2 heterodimer inhibiting its activity and thereby negatively regulating their own expression. This heterodimer also activates nuclear receptors NR1D1/2 and RORA/B/G, which form a second feedback loop and which activate and repress BMAL1 transcription, respectively. CRY1 and CRY2 have redundant functions but also differential and selective contributions at least in defining the pace of the SCN circadian clock and its circadian transcriptional outputs. More potent transcriptional repressor in cerebellum and liver than CRY2, though more effective in lengthening the period of the SCN oscillator. On its side, CRY2 seems to play a critical role in tuning SCN circadian period by opposing the action of CRY1. With CRY2, is dispensable for circadian rhythm generation but necessary for the development of intercellular networks for rhythm synchrony. Capable of translocating circadian clock core proteins such as PER proteins to the nucleus (By similarity). Interacts with CLOCK-BMAL1 independently of PER proteins and is found at CLOCK-BMAL1-bound sites, suggesting that CRY may act as a molecular gatekeeper to maintain CLOCK-BMAL1 in a poised and repressed state until the proper time for transcriptional activation (By similarity). Represses CLOCK-BMAL1-mediated transcriptional activation (PubMed:11684328).</text>
</comment>
<comment type="cofactor">
    <cofactor evidence="2">
        <name>FAD</name>
        <dbReference type="ChEBI" id="CHEBI:57692"/>
    </cofactor>
    <text evidence="2">Binds 1 FAD per subunit. Only a minority of the protein molecules contain bound FAD. Contrary to the situation in photolyases, the FAD is bound in a shallow, surface-exposed pocket.</text>
</comment>
<comment type="cofactor">
    <cofactor evidence="1">
        <name>(6R)-5,10-methylene-5,6,7,8-tetrahydrofolate</name>
        <dbReference type="ChEBI" id="CHEBI:15636"/>
    </cofactor>
    <text evidence="1">Binds 1 5,10-methenyltetrahydrofolate (MTHF) non-covalently per subunit.</text>
</comment>
<comment type="subunit">
    <text evidence="2">Component of the circadian core oscillator, which includes the CRY proteins, CLOCK or NPAS2, BMAL1 or BMAL2, CSNK1E, and the PER proteins.</text>
</comment>
<comment type="subcellular location">
    <subcellularLocation>
        <location evidence="2">Cytoplasm</location>
    </subcellularLocation>
    <subcellularLocation>
        <location evidence="2">Nucleus</location>
    </subcellularLocation>
    <text evidence="2">Translocated to the nucleus through interaction with other Clock proteins such as PER2 or BMAL1.</text>
</comment>
<comment type="tissue specificity">
    <text evidence="5">Expressed in the pineal gland.</text>
</comment>
<comment type="induction">
    <text evidence="5">Up-regulated by light. Higher levels in light/dark cycle than in total darkness.</text>
</comment>
<comment type="similarity">
    <text evidence="6">Belongs to the DNA photolyase class-1 family.</text>
</comment>
<reference key="1">
    <citation type="journal article" date="2001" name="Neurosci. Lett.">
        <title>Chicken pineal Cry genes: light-dependent up-regulation of cCry1 and cCry2 transcripts.</title>
        <authorList>
            <person name="Yamamoto K."/>
            <person name="Okano T."/>
            <person name="Fukada Y."/>
        </authorList>
    </citation>
    <scope>NUCLEOTIDE SEQUENCE [MRNA]</scope>
    <scope>FUNCTION</scope>
    <scope>TISSUE SPECIFICITY</scope>
    <scope>INDUCTION</scope>
    <source>
        <tissue>Pineal gland</tissue>
    </source>
</reference>